<reference key="1">
    <citation type="journal article" date="1998" name="DNA Res.">
        <title>Prediction of the coding sequences of unidentified human genes. XI. The complete sequences of 100 new cDNA clones from brain which code for large proteins in vitro.</title>
        <authorList>
            <person name="Nagase T."/>
            <person name="Ishikawa K."/>
            <person name="Suyama M."/>
            <person name="Kikuno R."/>
            <person name="Miyajima N."/>
            <person name="Tanaka A."/>
            <person name="Kotani H."/>
            <person name="Nomura N."/>
            <person name="Ohara O."/>
        </authorList>
    </citation>
    <scope>NUCLEOTIDE SEQUENCE [LARGE SCALE MRNA] (ISOFORM 1)</scope>
    <source>
        <tissue>Brain</tissue>
    </source>
</reference>
<reference key="2">
    <citation type="submission" date="1997-06" db="EMBL/GenBank/DDBJ databases">
        <authorList>
            <person name="Yu W."/>
            <person name="Sarginson J."/>
            <person name="Gibbs R.A."/>
        </authorList>
    </citation>
    <scope>NUCLEOTIDE SEQUENCE [LARGE SCALE MRNA] (ISOFORM 2)</scope>
    <source>
        <tissue>Brain</tissue>
    </source>
</reference>
<reference key="3">
    <citation type="journal article" date="2004" name="Nat. Genet.">
        <title>Complete sequencing and characterization of 21,243 full-length human cDNAs.</title>
        <authorList>
            <person name="Ota T."/>
            <person name="Suzuki Y."/>
            <person name="Nishikawa T."/>
            <person name="Otsuki T."/>
            <person name="Sugiyama T."/>
            <person name="Irie R."/>
            <person name="Wakamatsu A."/>
            <person name="Hayashi K."/>
            <person name="Sato H."/>
            <person name="Nagai K."/>
            <person name="Kimura K."/>
            <person name="Makita H."/>
            <person name="Sekine M."/>
            <person name="Obayashi M."/>
            <person name="Nishi T."/>
            <person name="Shibahara T."/>
            <person name="Tanaka T."/>
            <person name="Ishii S."/>
            <person name="Yamamoto J."/>
            <person name="Saito K."/>
            <person name="Kawai Y."/>
            <person name="Isono Y."/>
            <person name="Nakamura Y."/>
            <person name="Nagahari K."/>
            <person name="Murakami K."/>
            <person name="Yasuda T."/>
            <person name="Iwayanagi T."/>
            <person name="Wagatsuma M."/>
            <person name="Shiratori A."/>
            <person name="Sudo H."/>
            <person name="Hosoiri T."/>
            <person name="Kaku Y."/>
            <person name="Kodaira H."/>
            <person name="Kondo H."/>
            <person name="Sugawara M."/>
            <person name="Takahashi M."/>
            <person name="Kanda K."/>
            <person name="Yokoi T."/>
            <person name="Furuya T."/>
            <person name="Kikkawa E."/>
            <person name="Omura Y."/>
            <person name="Abe K."/>
            <person name="Kamihara K."/>
            <person name="Katsuta N."/>
            <person name="Sato K."/>
            <person name="Tanikawa M."/>
            <person name="Yamazaki M."/>
            <person name="Ninomiya K."/>
            <person name="Ishibashi T."/>
            <person name="Yamashita H."/>
            <person name="Murakawa K."/>
            <person name="Fujimori K."/>
            <person name="Tanai H."/>
            <person name="Kimata M."/>
            <person name="Watanabe M."/>
            <person name="Hiraoka S."/>
            <person name="Chiba Y."/>
            <person name="Ishida S."/>
            <person name="Ono Y."/>
            <person name="Takiguchi S."/>
            <person name="Watanabe S."/>
            <person name="Yosida M."/>
            <person name="Hotuta T."/>
            <person name="Kusano J."/>
            <person name="Kanehori K."/>
            <person name="Takahashi-Fujii A."/>
            <person name="Hara H."/>
            <person name="Tanase T.-O."/>
            <person name="Nomura Y."/>
            <person name="Togiya S."/>
            <person name="Komai F."/>
            <person name="Hara R."/>
            <person name="Takeuchi K."/>
            <person name="Arita M."/>
            <person name="Imose N."/>
            <person name="Musashino K."/>
            <person name="Yuuki H."/>
            <person name="Oshima A."/>
            <person name="Sasaki N."/>
            <person name="Aotsuka S."/>
            <person name="Yoshikawa Y."/>
            <person name="Matsunawa H."/>
            <person name="Ichihara T."/>
            <person name="Shiohata N."/>
            <person name="Sano S."/>
            <person name="Moriya S."/>
            <person name="Momiyama H."/>
            <person name="Satoh N."/>
            <person name="Takami S."/>
            <person name="Terashima Y."/>
            <person name="Suzuki O."/>
            <person name="Nakagawa S."/>
            <person name="Senoh A."/>
            <person name="Mizoguchi H."/>
            <person name="Goto Y."/>
            <person name="Shimizu F."/>
            <person name="Wakebe H."/>
            <person name="Hishigaki H."/>
            <person name="Watanabe T."/>
            <person name="Sugiyama A."/>
            <person name="Takemoto M."/>
            <person name="Kawakami B."/>
            <person name="Yamazaki M."/>
            <person name="Watanabe K."/>
            <person name="Kumagai A."/>
            <person name="Itakura S."/>
            <person name="Fukuzumi Y."/>
            <person name="Fujimori Y."/>
            <person name="Komiyama M."/>
            <person name="Tashiro H."/>
            <person name="Tanigami A."/>
            <person name="Fujiwara T."/>
            <person name="Ono T."/>
            <person name="Yamada K."/>
            <person name="Fujii Y."/>
            <person name="Ozaki K."/>
            <person name="Hirao M."/>
            <person name="Ohmori Y."/>
            <person name="Kawabata A."/>
            <person name="Hikiji T."/>
            <person name="Kobatake N."/>
            <person name="Inagaki H."/>
            <person name="Ikema Y."/>
            <person name="Okamoto S."/>
            <person name="Okitani R."/>
            <person name="Kawakami T."/>
            <person name="Noguchi S."/>
            <person name="Itoh T."/>
            <person name="Shigeta K."/>
            <person name="Senba T."/>
            <person name="Matsumura K."/>
            <person name="Nakajima Y."/>
            <person name="Mizuno T."/>
            <person name="Morinaga M."/>
            <person name="Sasaki M."/>
            <person name="Togashi T."/>
            <person name="Oyama M."/>
            <person name="Hata H."/>
            <person name="Watanabe M."/>
            <person name="Komatsu T."/>
            <person name="Mizushima-Sugano J."/>
            <person name="Satoh T."/>
            <person name="Shirai Y."/>
            <person name="Takahashi Y."/>
            <person name="Nakagawa K."/>
            <person name="Okumura K."/>
            <person name="Nagase T."/>
            <person name="Nomura N."/>
            <person name="Kikuchi H."/>
            <person name="Masuho Y."/>
            <person name="Yamashita R."/>
            <person name="Nakai K."/>
            <person name="Yada T."/>
            <person name="Nakamura Y."/>
            <person name="Ohara O."/>
            <person name="Isogai T."/>
            <person name="Sugano S."/>
        </authorList>
    </citation>
    <scope>NUCLEOTIDE SEQUENCE [LARGE SCALE MRNA] (ISOFORM 8)</scope>
    <source>
        <tissue>Brain</tissue>
    </source>
</reference>
<reference key="4">
    <citation type="journal article" date="2006" name="Nature">
        <title>DNA sequence and analysis of human chromosome 8.</title>
        <authorList>
            <person name="Nusbaum C."/>
            <person name="Mikkelsen T.S."/>
            <person name="Zody M.C."/>
            <person name="Asakawa S."/>
            <person name="Taudien S."/>
            <person name="Garber M."/>
            <person name="Kodira C.D."/>
            <person name="Schueler M.G."/>
            <person name="Shimizu A."/>
            <person name="Whittaker C.A."/>
            <person name="Chang J.L."/>
            <person name="Cuomo C.A."/>
            <person name="Dewar K."/>
            <person name="FitzGerald M.G."/>
            <person name="Yang X."/>
            <person name="Allen N.R."/>
            <person name="Anderson S."/>
            <person name="Asakawa T."/>
            <person name="Blechschmidt K."/>
            <person name="Bloom T."/>
            <person name="Borowsky M.L."/>
            <person name="Butler J."/>
            <person name="Cook A."/>
            <person name="Corum B."/>
            <person name="DeArellano K."/>
            <person name="DeCaprio D."/>
            <person name="Dooley K.T."/>
            <person name="Dorris L. III"/>
            <person name="Engels R."/>
            <person name="Gloeckner G."/>
            <person name="Hafez N."/>
            <person name="Hagopian D.S."/>
            <person name="Hall J.L."/>
            <person name="Ishikawa S.K."/>
            <person name="Jaffe D.B."/>
            <person name="Kamat A."/>
            <person name="Kudoh J."/>
            <person name="Lehmann R."/>
            <person name="Lokitsang T."/>
            <person name="Macdonald P."/>
            <person name="Major J.E."/>
            <person name="Matthews C.D."/>
            <person name="Mauceli E."/>
            <person name="Menzel U."/>
            <person name="Mihalev A.H."/>
            <person name="Minoshima S."/>
            <person name="Murayama Y."/>
            <person name="Naylor J.W."/>
            <person name="Nicol R."/>
            <person name="Nguyen C."/>
            <person name="O'Leary S.B."/>
            <person name="O'Neill K."/>
            <person name="Parker S.C.J."/>
            <person name="Polley A."/>
            <person name="Raymond C.K."/>
            <person name="Reichwald K."/>
            <person name="Rodriguez J."/>
            <person name="Sasaki T."/>
            <person name="Schilhabel M."/>
            <person name="Siddiqui R."/>
            <person name="Smith C.L."/>
            <person name="Sneddon T.P."/>
            <person name="Talamas J.A."/>
            <person name="Tenzin P."/>
            <person name="Topham K."/>
            <person name="Venkataraman V."/>
            <person name="Wen G."/>
            <person name="Yamazaki S."/>
            <person name="Young S.K."/>
            <person name="Zeng Q."/>
            <person name="Zimmer A.R."/>
            <person name="Rosenthal A."/>
            <person name="Birren B.W."/>
            <person name="Platzer M."/>
            <person name="Shimizu N."/>
            <person name="Lander E.S."/>
        </authorList>
    </citation>
    <scope>NUCLEOTIDE SEQUENCE [LARGE SCALE GENOMIC DNA]</scope>
</reference>
<reference key="5">
    <citation type="journal article" date="2004" name="Genome Res.">
        <title>The status, quality, and expansion of the NIH full-length cDNA project: the Mammalian Gene Collection (MGC).</title>
        <authorList>
            <consortium name="The MGC Project Team"/>
        </authorList>
    </citation>
    <scope>NUCLEOTIDE SEQUENCE [LARGE SCALE MRNA] (ISOFORM 3)</scope>
    <source>
        <tissue>Hypothalamus</tissue>
    </source>
</reference>
<reference key="6">
    <citation type="submission" date="2001-09" db="EMBL/GenBank/DDBJ databases">
        <authorList>
            <person name="Ho H.C."/>
        </authorList>
    </citation>
    <scope>NUCLEOTIDE SEQUENCE [MRNA] OF 689-1411 (ISOFORMS 4 AND 5)</scope>
</reference>
<reference key="7">
    <citation type="journal article" date="2003" name="Genomics">
        <title>Genomic definition of RIM proteins: evolutionary amplification of a family of synaptic regulatory proteins.</title>
        <authorList>
            <person name="Wang Y."/>
            <person name="Suedhof T.C."/>
        </authorList>
    </citation>
    <scope>ALTERNATIVE SPLICING</scope>
    <scope>GENOMIC ORGANIZATION</scope>
</reference>
<reference key="8">
    <citation type="journal article" date="2009" name="Sci. Signal.">
        <title>Quantitative phosphoproteomic analysis of T cell receptor signaling reveals system-wide modulation of protein-protein interactions.</title>
        <authorList>
            <person name="Mayya V."/>
            <person name="Lundgren D.H."/>
            <person name="Hwang S.-I."/>
            <person name="Rezaul K."/>
            <person name="Wu L."/>
            <person name="Eng J.K."/>
            <person name="Rodionov V."/>
            <person name="Han D.K."/>
        </authorList>
    </citation>
    <scope>PHOSPHORYLATION [LARGE SCALE ANALYSIS] AT THR-689</scope>
    <scope>IDENTIFICATION BY MASS SPECTROMETRY [LARGE SCALE ANALYSIS]</scope>
    <source>
        <tissue>Leukemic T-cell</tissue>
    </source>
</reference>
<reference key="9">
    <citation type="journal article" date="2011" name="Sci. Signal.">
        <title>System-wide temporal characterization of the proteome and phosphoproteome of human embryonic stem cell differentiation.</title>
        <authorList>
            <person name="Rigbolt K.T."/>
            <person name="Prokhorova T.A."/>
            <person name="Akimov V."/>
            <person name="Henningsen J."/>
            <person name="Johansen P.T."/>
            <person name="Kratchmarova I."/>
            <person name="Kassem M."/>
            <person name="Mann M."/>
            <person name="Olsen J.V."/>
            <person name="Blagoev B."/>
        </authorList>
    </citation>
    <scope>PHOSPHORYLATION [LARGE SCALE ANALYSIS] AT SER-400 AND SER-1396</scope>
    <scope>IDENTIFICATION BY MASS SPECTROMETRY [LARGE SCALE ANALYSIS]</scope>
</reference>
<reference key="10">
    <citation type="journal article" date="2013" name="J. Dermatol. Sci.">
        <title>SYT14L, especially its C2 domain, is involved in regulating melanocyte differentiation.</title>
        <authorList>
            <person name="Yoo J.C."/>
            <person name="Lim T.Y."/>
            <person name="Park J.S."/>
            <person name="Hah Y.S."/>
            <person name="Park N."/>
            <person name="Hong S.G."/>
            <person name="Park J.Y."/>
            <person name="Yoon T.J."/>
        </authorList>
    </citation>
    <scope>FUNCTION</scope>
    <scope>TISSUE SPECIFICITY</scope>
</reference>
<reference key="11">
    <citation type="journal article" date="2020" name="Am. J. Hum. Genet.">
        <title>Loss of Function of RIMS2 Causes a Syndromic Congenital Cone-Rod Synaptic Disease with Neurodevelopmental and Pancreatic Involvement.</title>
        <authorList>
            <person name="Mechaussier S."/>
            <person name="Almoallem B."/>
            <person name="Zeitz C."/>
            <person name="Van Schil K."/>
            <person name="Jeddawi L."/>
            <person name="Van Dorpe J."/>
            <person name="Duenas Rey A."/>
            <person name="Condroyer C."/>
            <person name="Pelle O."/>
            <person name="Polak M."/>
            <person name="Boddaert N."/>
            <person name="Bahi-Buisson N."/>
            <person name="Cavallin M."/>
            <person name="Bacquet J.L."/>
            <person name="Mouallem-Beziere A."/>
            <person name="Zambrowski O."/>
            <person name="Sahel J.A."/>
            <person name="Audo I."/>
            <person name="Kaplan J."/>
            <person name="Rozet J.M."/>
            <person name="De Baere E."/>
            <person name="Perrault I."/>
        </authorList>
    </citation>
    <scope>INVOLVEMENT IN CRSDS</scope>
    <scope>VARIANTS CRSDS 532-SER--SER-1411 DEL; 962-GLN--SER-1411 DEL; 1042-GLU--SER-1411 DEL AND 1170-THR--SER-1411 DEL</scope>
    <scope>TISSUE SPECIFICITY</scope>
</reference>
<reference key="12">
    <citation type="submission" date="2004-11" db="PDB data bank">
        <title>PDZ domain and the first C2 domain of human RIM2B.</title>
        <authorList>
            <consortium name="RIKEN structural genomics initiative (RSGI)"/>
        </authorList>
    </citation>
    <scope>STRUCTURE BY NMR OF 637-934</scope>
</reference>
<accession>Q9UQ26</accession>
<accession>B3KX91</accession>
<accession>F8WD47</accession>
<accession>O43413</accession>
<accession>Q86XL9</accession>
<accession>Q8IWV9</accession>
<accession>Q8IWW1</accession>
<dbReference type="EMBL" id="AB018294">
    <property type="protein sequence ID" value="BAA34471.2"/>
    <property type="status" value="ALT_INIT"/>
    <property type="molecule type" value="mRNA"/>
</dbReference>
<dbReference type="EMBL" id="AF007156">
    <property type="protein sequence ID" value="AAC19157.1"/>
    <property type="molecule type" value="mRNA"/>
</dbReference>
<dbReference type="EMBL" id="AK126939">
    <property type="protein sequence ID" value="BAG54403.1"/>
    <property type="molecule type" value="mRNA"/>
</dbReference>
<dbReference type="EMBL" id="AC007751">
    <property type="status" value="NOT_ANNOTATED_CDS"/>
    <property type="molecule type" value="Genomic_DNA"/>
</dbReference>
<dbReference type="EMBL" id="AC012213">
    <property type="status" value="NOT_ANNOTATED_CDS"/>
    <property type="molecule type" value="Genomic_DNA"/>
</dbReference>
<dbReference type="EMBL" id="AC090448">
    <property type="status" value="NOT_ANNOTATED_CDS"/>
    <property type="molecule type" value="Genomic_DNA"/>
</dbReference>
<dbReference type="EMBL" id="AC090686">
    <property type="status" value="NOT_ANNOTATED_CDS"/>
    <property type="molecule type" value="Genomic_DNA"/>
</dbReference>
<dbReference type="EMBL" id="AC107933">
    <property type="status" value="NOT_ANNOTATED_CDS"/>
    <property type="molecule type" value="Genomic_DNA"/>
</dbReference>
<dbReference type="EMBL" id="AP001572">
    <property type="status" value="NOT_ANNOTATED_CDS"/>
    <property type="molecule type" value="Genomic_DNA"/>
</dbReference>
<dbReference type="EMBL" id="AP002849">
    <property type="status" value="NOT_ANNOTATED_CDS"/>
    <property type="molecule type" value="Genomic_DNA"/>
</dbReference>
<dbReference type="EMBL" id="BC043144">
    <property type="protein sequence ID" value="AAH43144.1"/>
    <property type="molecule type" value="mRNA"/>
</dbReference>
<dbReference type="EMBL" id="AY057119">
    <property type="protein sequence ID" value="AAL23679.1"/>
    <property type="molecule type" value="mRNA"/>
</dbReference>
<dbReference type="EMBL" id="AY057121">
    <property type="protein sequence ID" value="AAL23681.1"/>
    <property type="molecule type" value="mRNA"/>
</dbReference>
<dbReference type="CCDS" id="CCDS43761.1">
    <molecule id="Q9UQ26-3"/>
</dbReference>
<dbReference type="CCDS" id="CCDS55269.1">
    <molecule id="Q9UQ26-8"/>
</dbReference>
<dbReference type="CCDS" id="CCDS64948.1">
    <molecule id="Q9UQ26-1"/>
</dbReference>
<dbReference type="CCDS" id="CCDS64949.1">
    <molecule id="Q9UQ26-7"/>
</dbReference>
<dbReference type="RefSeq" id="NP_001093587.1">
    <molecule id="Q9UQ26-8"/>
    <property type="nucleotide sequence ID" value="NM_001100117.3"/>
</dbReference>
<dbReference type="RefSeq" id="NP_001269810.1">
    <molecule id="Q9UQ26-1"/>
    <property type="nucleotide sequence ID" value="NM_001282881.2"/>
</dbReference>
<dbReference type="RefSeq" id="NP_001269811.1">
    <molecule id="Q9UQ26-7"/>
    <property type="nucleotide sequence ID" value="NM_001282882.2"/>
</dbReference>
<dbReference type="RefSeq" id="NP_055492.3">
    <molecule id="Q9UQ26-3"/>
    <property type="nucleotide sequence ID" value="NM_014677.4"/>
</dbReference>
<dbReference type="PDB" id="1V27">
    <property type="method" value="NMR"/>
    <property type="chains" value="A=807-934"/>
</dbReference>
<dbReference type="PDB" id="1WFG">
    <property type="method" value="NMR"/>
    <property type="chains" value="A=637-754"/>
</dbReference>
<dbReference type="PDBsum" id="1V27"/>
<dbReference type="PDBsum" id="1WFG"/>
<dbReference type="BMRB" id="Q9UQ26"/>
<dbReference type="SMR" id="Q9UQ26"/>
<dbReference type="BioGRID" id="115051">
    <property type="interactions" value="12"/>
</dbReference>
<dbReference type="FunCoup" id="Q9UQ26">
    <property type="interactions" value="555"/>
</dbReference>
<dbReference type="IntAct" id="Q9UQ26">
    <property type="interactions" value="15"/>
</dbReference>
<dbReference type="MINT" id="Q9UQ26"/>
<dbReference type="STRING" id="9606.ENSP00000427018"/>
<dbReference type="GlyCosmos" id="Q9UQ26">
    <property type="glycosylation" value="1 site, 1 glycan"/>
</dbReference>
<dbReference type="GlyGen" id="Q9UQ26">
    <property type="glycosylation" value="2 sites, 1 N-linked glycan (1 site), 1 O-linked glycan (1 site)"/>
</dbReference>
<dbReference type="iPTMnet" id="Q9UQ26"/>
<dbReference type="PhosphoSitePlus" id="Q9UQ26"/>
<dbReference type="BioMuta" id="RIMS2"/>
<dbReference type="DMDM" id="41019522"/>
<dbReference type="jPOST" id="Q9UQ26"/>
<dbReference type="MassIVE" id="Q9UQ26"/>
<dbReference type="PaxDb" id="9606-ENSP00000262231"/>
<dbReference type="PeptideAtlas" id="Q9UQ26"/>
<dbReference type="ProteomicsDB" id="31373"/>
<dbReference type="ProteomicsDB" id="85496">
    <molecule id="Q9UQ26-6"/>
</dbReference>
<dbReference type="ProteomicsDB" id="85497">
    <molecule id="Q9UQ26-1"/>
</dbReference>
<dbReference type="ProteomicsDB" id="85498">
    <molecule id="Q9UQ26-2"/>
</dbReference>
<dbReference type="ProteomicsDB" id="85499">
    <molecule id="Q9UQ26-3"/>
</dbReference>
<dbReference type="ProteomicsDB" id="85500">
    <molecule id="Q9UQ26-4"/>
</dbReference>
<dbReference type="ProteomicsDB" id="85501">
    <molecule id="Q9UQ26-5"/>
</dbReference>
<dbReference type="ProteomicsDB" id="85502">
    <molecule id="Q9UQ26-7"/>
</dbReference>
<dbReference type="Antibodypedia" id="26403">
    <property type="antibodies" value="210 antibodies from 29 providers"/>
</dbReference>
<dbReference type="DNASU" id="9699"/>
<dbReference type="Ensembl" id="ENST00000262231.14">
    <molecule id="Q9UQ26-1"/>
    <property type="protein sequence ID" value="ENSP00000262231.10"/>
    <property type="gene ID" value="ENSG00000176406.25"/>
</dbReference>
<dbReference type="Ensembl" id="ENST00000504942.6">
    <molecule id="Q9UQ26-8"/>
    <property type="protein sequence ID" value="ENSP00000427018.3"/>
    <property type="gene ID" value="ENSG00000176406.25"/>
</dbReference>
<dbReference type="Ensembl" id="ENST00000507740.6">
    <molecule id="Q9UQ26-3"/>
    <property type="protein sequence ID" value="ENSP00000423559.1"/>
    <property type="gene ID" value="ENSG00000176406.25"/>
</dbReference>
<dbReference type="Ensembl" id="ENST00000523362.6">
    <molecule id="Q9UQ26-7"/>
    <property type="protein sequence ID" value="ENSP00000428478.2"/>
    <property type="gene ID" value="ENSG00000176406.25"/>
</dbReference>
<dbReference type="GeneID" id="9699"/>
<dbReference type="KEGG" id="hsa:9699"/>
<dbReference type="UCSC" id="uc003ylq.4">
    <molecule id="Q9UQ26-6"/>
    <property type="organism name" value="human"/>
</dbReference>
<dbReference type="AGR" id="HGNC:17283"/>
<dbReference type="CTD" id="9699"/>
<dbReference type="DisGeNET" id="9699"/>
<dbReference type="GeneCards" id="RIMS2"/>
<dbReference type="HGNC" id="HGNC:17283">
    <property type="gene designation" value="RIMS2"/>
</dbReference>
<dbReference type="HPA" id="ENSG00000176406">
    <property type="expression patterns" value="Tissue enhanced (adrenal gland, brain, retina)"/>
</dbReference>
<dbReference type="MalaCards" id="RIMS2"/>
<dbReference type="MIM" id="606630">
    <property type="type" value="gene"/>
</dbReference>
<dbReference type="MIM" id="618970">
    <property type="type" value="phenotype"/>
</dbReference>
<dbReference type="neXtProt" id="NX_Q9UQ26"/>
<dbReference type="OpenTargets" id="ENSG00000176406"/>
<dbReference type="PharmGKB" id="PA38445"/>
<dbReference type="VEuPathDB" id="HostDB:ENSG00000176406"/>
<dbReference type="eggNOG" id="KOG2060">
    <property type="taxonomic scope" value="Eukaryota"/>
</dbReference>
<dbReference type="GeneTree" id="ENSGT00940000155236"/>
<dbReference type="InParanoid" id="Q9UQ26"/>
<dbReference type="OrthoDB" id="420032at2759"/>
<dbReference type="PAN-GO" id="Q9UQ26">
    <property type="GO annotations" value="7 GO annotations based on evolutionary models"/>
</dbReference>
<dbReference type="PhylomeDB" id="Q9UQ26"/>
<dbReference type="TreeFam" id="TF321703"/>
<dbReference type="PathwayCommons" id="Q9UQ26"/>
<dbReference type="SignaLink" id="Q9UQ26"/>
<dbReference type="SIGNOR" id="Q9UQ26"/>
<dbReference type="BioGRID-ORCS" id="9699">
    <property type="hits" value="8 hits in 1147 CRISPR screens"/>
</dbReference>
<dbReference type="ChiTaRS" id="RIMS2">
    <property type="organism name" value="human"/>
</dbReference>
<dbReference type="EvolutionaryTrace" id="Q9UQ26"/>
<dbReference type="GeneWiki" id="RIMS2"/>
<dbReference type="GenomeRNAi" id="9699"/>
<dbReference type="Pharos" id="Q9UQ26">
    <property type="development level" value="Tbio"/>
</dbReference>
<dbReference type="PRO" id="PR:Q9UQ26"/>
<dbReference type="Proteomes" id="UP000005640">
    <property type="component" value="Chromosome 8"/>
</dbReference>
<dbReference type="RNAct" id="Q9UQ26">
    <property type="molecule type" value="protein"/>
</dbReference>
<dbReference type="Bgee" id="ENSG00000176406">
    <property type="expression patterns" value="Expressed in lateral nuclear group of thalamus and 146 other cell types or tissues"/>
</dbReference>
<dbReference type="ExpressionAtlas" id="Q9UQ26">
    <property type="expression patterns" value="baseline and differential"/>
</dbReference>
<dbReference type="GO" id="GO:0042995">
    <property type="term" value="C:cell projection"/>
    <property type="evidence" value="ECO:0007669"/>
    <property type="project" value="UniProtKB-KW"/>
</dbReference>
<dbReference type="GO" id="GO:0070062">
    <property type="term" value="C:extracellular exosome"/>
    <property type="evidence" value="ECO:0007005"/>
    <property type="project" value="UniProtKB"/>
</dbReference>
<dbReference type="GO" id="GO:0048786">
    <property type="term" value="C:presynaptic active zone"/>
    <property type="evidence" value="ECO:0000304"/>
    <property type="project" value="ParkinsonsUK-UCL"/>
</dbReference>
<dbReference type="GO" id="GO:0098831">
    <property type="term" value="C:presynaptic active zone cytoplasmic component"/>
    <property type="evidence" value="ECO:0000318"/>
    <property type="project" value="GO_Central"/>
</dbReference>
<dbReference type="GO" id="GO:0042734">
    <property type="term" value="C:presynaptic membrane"/>
    <property type="evidence" value="ECO:0000318"/>
    <property type="project" value="GO_Central"/>
</dbReference>
<dbReference type="GO" id="GO:0031267">
    <property type="term" value="F:small GTPase binding"/>
    <property type="evidence" value="ECO:0007669"/>
    <property type="project" value="InterPro"/>
</dbReference>
<dbReference type="GO" id="GO:0098882">
    <property type="term" value="F:structural constituent of presynaptic active zone"/>
    <property type="evidence" value="ECO:0000318"/>
    <property type="project" value="GO_Central"/>
</dbReference>
<dbReference type="GO" id="GO:0044325">
    <property type="term" value="F:transmembrane transporter binding"/>
    <property type="evidence" value="ECO:0000250"/>
    <property type="project" value="ParkinsonsUK-UCL"/>
</dbReference>
<dbReference type="GO" id="GO:0008270">
    <property type="term" value="F:zinc ion binding"/>
    <property type="evidence" value="ECO:0007669"/>
    <property type="project" value="UniProtKB-KW"/>
</dbReference>
<dbReference type="GO" id="GO:0007188">
    <property type="term" value="P:adenylate cyclase-modulating G protein-coupled receptor signaling pathway"/>
    <property type="evidence" value="ECO:0000250"/>
    <property type="project" value="ParkinsonsUK-UCL"/>
</dbReference>
<dbReference type="GO" id="GO:0048791">
    <property type="term" value="P:calcium ion-regulated exocytosis of neurotransmitter"/>
    <property type="evidence" value="ECO:0000250"/>
    <property type="project" value="ParkinsonsUK-UCL"/>
</dbReference>
<dbReference type="GO" id="GO:0017156">
    <property type="term" value="P:calcium-ion regulated exocytosis"/>
    <property type="evidence" value="ECO:0000250"/>
    <property type="project" value="ParkinsonsUK-UCL"/>
</dbReference>
<dbReference type="GO" id="GO:0030154">
    <property type="term" value="P:cell differentiation"/>
    <property type="evidence" value="ECO:0007669"/>
    <property type="project" value="UniProtKB-KW"/>
</dbReference>
<dbReference type="GO" id="GO:0030073">
    <property type="term" value="P:insulin secretion"/>
    <property type="evidence" value="ECO:0000250"/>
    <property type="project" value="ParkinsonsUK-UCL"/>
</dbReference>
<dbReference type="GO" id="GO:0006886">
    <property type="term" value="P:intracellular protein transport"/>
    <property type="evidence" value="ECO:0007669"/>
    <property type="project" value="InterPro"/>
</dbReference>
<dbReference type="GO" id="GO:1903861">
    <property type="term" value="P:positive regulation of dendrite extension"/>
    <property type="evidence" value="ECO:0000314"/>
    <property type="project" value="UniProtKB"/>
</dbReference>
<dbReference type="GO" id="GO:2000463">
    <property type="term" value="P:positive regulation of excitatory postsynaptic potential"/>
    <property type="evidence" value="ECO:0000250"/>
    <property type="project" value="ParkinsonsUK-UCL"/>
</dbReference>
<dbReference type="GO" id="GO:0097151">
    <property type="term" value="P:positive regulation of inhibitory postsynaptic potential"/>
    <property type="evidence" value="ECO:0000250"/>
    <property type="project" value="ParkinsonsUK-UCL"/>
</dbReference>
<dbReference type="GO" id="GO:0017157">
    <property type="term" value="P:regulation of exocytosis"/>
    <property type="evidence" value="ECO:0000250"/>
    <property type="project" value="ParkinsonsUK-UCL"/>
</dbReference>
<dbReference type="GO" id="GO:0042391">
    <property type="term" value="P:regulation of membrane potential"/>
    <property type="evidence" value="ECO:0000250"/>
    <property type="project" value="ParkinsonsUK-UCL"/>
</dbReference>
<dbReference type="GO" id="GO:2000300">
    <property type="term" value="P:regulation of synaptic vesicle exocytosis"/>
    <property type="evidence" value="ECO:0000318"/>
    <property type="project" value="GO_Central"/>
</dbReference>
<dbReference type="GO" id="GO:0061669">
    <property type="term" value="P:spontaneous neurotransmitter secretion"/>
    <property type="evidence" value="ECO:0000250"/>
    <property type="project" value="ParkinsonsUK-UCL"/>
</dbReference>
<dbReference type="GO" id="GO:0016081">
    <property type="term" value="P:synaptic vesicle docking"/>
    <property type="evidence" value="ECO:0000318"/>
    <property type="project" value="GO_Central"/>
</dbReference>
<dbReference type="GO" id="GO:0016082">
    <property type="term" value="P:synaptic vesicle priming"/>
    <property type="evidence" value="ECO:0000318"/>
    <property type="project" value="GO_Central"/>
</dbReference>
<dbReference type="CDD" id="cd04031">
    <property type="entry name" value="C2A_RIM1alpha"/>
    <property type="match status" value="1"/>
</dbReference>
<dbReference type="CDD" id="cd04028">
    <property type="entry name" value="C2B_RIM1alpha"/>
    <property type="match status" value="1"/>
</dbReference>
<dbReference type="CDD" id="cd06714">
    <property type="entry name" value="PDZ_RIM-like"/>
    <property type="match status" value="1"/>
</dbReference>
<dbReference type="FunFam" id="3.30.40.10:FF:000546">
    <property type="entry name" value="Regulating synaptic membrane exocytosis 1"/>
    <property type="match status" value="1"/>
</dbReference>
<dbReference type="FunFam" id="2.60.40.150:FF:000001">
    <property type="entry name" value="Regulating synaptic membrane exocytosis 3, isoform CRA_a"/>
    <property type="match status" value="1"/>
</dbReference>
<dbReference type="FunFam" id="2.30.42.10:FF:000003">
    <property type="entry name" value="Regulating synaptic membrane exocytosis protein 1, putative"/>
    <property type="match status" value="1"/>
</dbReference>
<dbReference type="FunFam" id="2.60.40.150:FF:000003">
    <property type="entry name" value="Regulating synaptic membrane exocytosis protein 2"/>
    <property type="match status" value="1"/>
</dbReference>
<dbReference type="Gene3D" id="2.30.42.10">
    <property type="match status" value="1"/>
</dbReference>
<dbReference type="Gene3D" id="2.60.40.150">
    <property type="entry name" value="C2 domain"/>
    <property type="match status" value="2"/>
</dbReference>
<dbReference type="Gene3D" id="3.30.40.10">
    <property type="entry name" value="Zinc/RING finger domain, C3HC4 (zinc finger)"/>
    <property type="match status" value="1"/>
</dbReference>
<dbReference type="InterPro" id="IPR000008">
    <property type="entry name" value="C2_dom"/>
</dbReference>
<dbReference type="InterPro" id="IPR035892">
    <property type="entry name" value="C2_domain_sf"/>
</dbReference>
<dbReference type="InterPro" id="IPR001478">
    <property type="entry name" value="PDZ"/>
</dbReference>
<dbReference type="InterPro" id="IPR036034">
    <property type="entry name" value="PDZ_sf"/>
</dbReference>
<dbReference type="InterPro" id="IPR010911">
    <property type="entry name" value="Rab_BD"/>
</dbReference>
<dbReference type="InterPro" id="IPR039032">
    <property type="entry name" value="Rim-like"/>
</dbReference>
<dbReference type="InterPro" id="IPR054386">
    <property type="entry name" value="RIM_Znf"/>
</dbReference>
<dbReference type="InterPro" id="IPR017455">
    <property type="entry name" value="Znf_FYVE-rel"/>
</dbReference>
<dbReference type="InterPro" id="IPR011011">
    <property type="entry name" value="Znf_FYVE_PHD"/>
</dbReference>
<dbReference type="InterPro" id="IPR013083">
    <property type="entry name" value="Znf_RING/FYVE/PHD"/>
</dbReference>
<dbReference type="PANTHER" id="PTHR12157">
    <property type="entry name" value="REGULATING SYNAPTIC MEMBRANE EXOCYTOSIS PROTEIN"/>
    <property type="match status" value="1"/>
</dbReference>
<dbReference type="PANTHER" id="PTHR12157:SF15">
    <property type="entry name" value="REGULATING SYNAPTIC MEMBRANE EXOCYTOSIS PROTEIN 2"/>
    <property type="match status" value="1"/>
</dbReference>
<dbReference type="Pfam" id="PF00168">
    <property type="entry name" value="C2"/>
    <property type="match status" value="2"/>
</dbReference>
<dbReference type="Pfam" id="PF00595">
    <property type="entry name" value="PDZ"/>
    <property type="match status" value="1"/>
</dbReference>
<dbReference type="Pfam" id="PF22601">
    <property type="entry name" value="RIM2a_ZnF"/>
    <property type="match status" value="1"/>
</dbReference>
<dbReference type="SMART" id="SM00239">
    <property type="entry name" value="C2"/>
    <property type="match status" value="2"/>
</dbReference>
<dbReference type="SMART" id="SM00228">
    <property type="entry name" value="PDZ"/>
    <property type="match status" value="1"/>
</dbReference>
<dbReference type="SUPFAM" id="SSF49562">
    <property type="entry name" value="C2 domain (Calcium/lipid-binding domain, CaLB)"/>
    <property type="match status" value="2"/>
</dbReference>
<dbReference type="SUPFAM" id="SSF57903">
    <property type="entry name" value="FYVE/PHD zinc finger"/>
    <property type="match status" value="1"/>
</dbReference>
<dbReference type="SUPFAM" id="SSF50156">
    <property type="entry name" value="PDZ domain-like"/>
    <property type="match status" value="1"/>
</dbReference>
<dbReference type="PROSITE" id="PS50004">
    <property type="entry name" value="C2"/>
    <property type="match status" value="2"/>
</dbReference>
<dbReference type="PROSITE" id="PS50106">
    <property type="entry name" value="PDZ"/>
    <property type="match status" value="1"/>
</dbReference>
<dbReference type="PROSITE" id="PS50916">
    <property type="entry name" value="RABBD"/>
    <property type="match status" value="1"/>
</dbReference>
<dbReference type="PROSITE" id="PS50178">
    <property type="entry name" value="ZF_FYVE"/>
    <property type="match status" value="1"/>
</dbReference>
<proteinExistence type="evidence at protein level"/>
<gene>
    <name type="primary">RIMS2</name>
    <name type="synonym">KIAA0751</name>
    <name type="synonym">RAB3IP3</name>
    <name type="synonym">RIM2</name>
</gene>
<protein>
    <recommendedName>
        <fullName>Regulating synaptic membrane exocytosis protein 2</fullName>
    </recommendedName>
    <alternativeName>
        <fullName>Rab-3-interacting molecule 2</fullName>
        <shortName>RIM 2</shortName>
    </alternativeName>
    <alternativeName>
        <fullName>Rab-3-interacting protein 3</fullName>
    </alternativeName>
</protein>
<organism>
    <name type="scientific">Homo sapiens</name>
    <name type="common">Human</name>
    <dbReference type="NCBI Taxonomy" id="9606"/>
    <lineage>
        <taxon>Eukaryota</taxon>
        <taxon>Metazoa</taxon>
        <taxon>Chordata</taxon>
        <taxon>Craniata</taxon>
        <taxon>Vertebrata</taxon>
        <taxon>Euteleostomi</taxon>
        <taxon>Mammalia</taxon>
        <taxon>Eutheria</taxon>
        <taxon>Euarchontoglires</taxon>
        <taxon>Primates</taxon>
        <taxon>Haplorrhini</taxon>
        <taxon>Catarrhini</taxon>
        <taxon>Hominidae</taxon>
        <taxon>Homo</taxon>
    </lineage>
</organism>
<feature type="chain" id="PRO_0000190201" description="Regulating synaptic membrane exocytosis protein 2">
    <location>
        <begin position="1"/>
        <end position="1411"/>
    </location>
</feature>
<feature type="domain" description="RabBD" evidence="7">
    <location>
        <begin position="26"/>
        <end position="185"/>
    </location>
</feature>
<feature type="domain" description="PDZ" evidence="6">
    <location>
        <begin position="668"/>
        <end position="754"/>
    </location>
</feature>
<feature type="domain" description="C2 1" evidence="4">
    <location>
        <begin position="805"/>
        <end position="928"/>
    </location>
</feature>
<feature type="domain" description="C2 2" evidence="4">
    <location>
        <begin position="1257"/>
        <end position="1375"/>
    </location>
</feature>
<feature type="zinc finger region" description="FYVE-type" evidence="5">
    <location>
        <begin position="117"/>
        <end position="173"/>
    </location>
</feature>
<feature type="region of interest" description="Disordered" evidence="8">
    <location>
        <begin position="1"/>
        <end position="33"/>
    </location>
</feature>
<feature type="region of interest" description="Disordered" evidence="8">
    <location>
        <begin position="203"/>
        <end position="598"/>
    </location>
</feature>
<feature type="region of interest" description="Disordered" evidence="8">
    <location>
        <begin position="623"/>
        <end position="650"/>
    </location>
</feature>
<feature type="region of interest" description="Disordered" evidence="8">
    <location>
        <begin position="762"/>
        <end position="793"/>
    </location>
</feature>
<feature type="region of interest" description="Disordered" evidence="8">
    <location>
        <begin position="939"/>
        <end position="973"/>
    </location>
</feature>
<feature type="region of interest" description="Disordered" evidence="8">
    <location>
        <begin position="993"/>
        <end position="1190"/>
    </location>
</feature>
<feature type="compositionally biased region" description="Basic and acidic residues" evidence="8">
    <location>
        <begin position="203"/>
        <end position="216"/>
    </location>
</feature>
<feature type="compositionally biased region" description="Basic and acidic residues" evidence="8">
    <location>
        <begin position="273"/>
        <end position="287"/>
    </location>
</feature>
<feature type="compositionally biased region" description="Basic and acidic residues" evidence="8">
    <location>
        <begin position="318"/>
        <end position="329"/>
    </location>
</feature>
<feature type="compositionally biased region" description="Basic and acidic residues" evidence="8">
    <location>
        <begin position="348"/>
        <end position="366"/>
    </location>
</feature>
<feature type="compositionally biased region" description="Basic and acidic residues" evidence="8">
    <location>
        <begin position="382"/>
        <end position="401"/>
    </location>
</feature>
<feature type="compositionally biased region" description="Basic and acidic residues" evidence="8">
    <location>
        <begin position="410"/>
        <end position="434"/>
    </location>
</feature>
<feature type="compositionally biased region" description="Polar residues" evidence="8">
    <location>
        <begin position="451"/>
        <end position="463"/>
    </location>
</feature>
<feature type="compositionally biased region" description="Basic and acidic residues" evidence="8">
    <location>
        <begin position="475"/>
        <end position="492"/>
    </location>
</feature>
<feature type="compositionally biased region" description="Polar residues" evidence="8">
    <location>
        <begin position="510"/>
        <end position="521"/>
    </location>
</feature>
<feature type="compositionally biased region" description="Basic residues" evidence="8">
    <location>
        <begin position="528"/>
        <end position="537"/>
    </location>
</feature>
<feature type="compositionally biased region" description="Acidic residues" evidence="8">
    <location>
        <begin position="558"/>
        <end position="568"/>
    </location>
</feature>
<feature type="compositionally biased region" description="Basic and acidic residues" evidence="8">
    <location>
        <begin position="569"/>
        <end position="583"/>
    </location>
</feature>
<feature type="compositionally biased region" description="Basic and acidic residues" evidence="8">
    <location>
        <begin position="634"/>
        <end position="644"/>
    </location>
</feature>
<feature type="compositionally biased region" description="Polar residues" evidence="8">
    <location>
        <begin position="994"/>
        <end position="1015"/>
    </location>
</feature>
<feature type="compositionally biased region" description="Polar residues" evidence="8">
    <location>
        <begin position="1049"/>
        <end position="1059"/>
    </location>
</feature>
<feature type="compositionally biased region" description="Basic and acidic residues" evidence="8">
    <location>
        <begin position="1060"/>
        <end position="1113"/>
    </location>
</feature>
<feature type="compositionally biased region" description="Polar residues" evidence="8">
    <location>
        <begin position="1143"/>
        <end position="1153"/>
    </location>
</feature>
<feature type="binding site" evidence="5">
    <location>
        <position position="123"/>
    </location>
    <ligand>
        <name>Zn(2+)</name>
        <dbReference type="ChEBI" id="CHEBI:29105"/>
        <label>1</label>
    </ligand>
</feature>
<feature type="binding site" evidence="5">
    <location>
        <position position="126"/>
    </location>
    <ligand>
        <name>Zn(2+)</name>
        <dbReference type="ChEBI" id="CHEBI:29105"/>
        <label>1</label>
    </ligand>
</feature>
<feature type="binding site" evidence="5">
    <location>
        <position position="139"/>
    </location>
    <ligand>
        <name>Zn(2+)</name>
        <dbReference type="ChEBI" id="CHEBI:29105"/>
        <label>2</label>
    </ligand>
</feature>
<feature type="binding site" evidence="5">
    <location>
        <position position="142"/>
    </location>
    <ligand>
        <name>Zn(2+)</name>
        <dbReference type="ChEBI" id="CHEBI:29105"/>
        <label>2</label>
    </ligand>
</feature>
<feature type="binding site" evidence="5">
    <location>
        <position position="147"/>
    </location>
    <ligand>
        <name>Zn(2+)</name>
        <dbReference type="ChEBI" id="CHEBI:29105"/>
        <label>1</label>
    </ligand>
</feature>
<feature type="binding site" evidence="5">
    <location>
        <position position="150"/>
    </location>
    <ligand>
        <name>Zn(2+)</name>
        <dbReference type="ChEBI" id="CHEBI:29105"/>
        <label>1</label>
    </ligand>
</feature>
<feature type="binding site" evidence="5">
    <location>
        <position position="165"/>
    </location>
    <ligand>
        <name>Zn(2+)</name>
        <dbReference type="ChEBI" id="CHEBI:29105"/>
        <label>2</label>
    </ligand>
</feature>
<feature type="binding site" evidence="5">
    <location>
        <position position="168"/>
    </location>
    <ligand>
        <name>Zn(2+)</name>
        <dbReference type="ChEBI" id="CHEBI:29105"/>
        <label>2</label>
    </ligand>
</feature>
<feature type="modified residue" description="Phosphoserine" evidence="18">
    <location>
        <position position="400"/>
    </location>
</feature>
<feature type="modified residue" description="Phosphothreonine" evidence="17">
    <location>
        <position position="689"/>
    </location>
</feature>
<feature type="modified residue" description="Phosphoserine" evidence="2">
    <location>
        <position position="791"/>
    </location>
</feature>
<feature type="modified residue" description="Phosphoserine" evidence="2">
    <location>
        <position position="794"/>
    </location>
</feature>
<feature type="modified residue" description="Phosphoserine" evidence="3">
    <location>
        <position position="1148"/>
    </location>
</feature>
<feature type="modified residue" description="Phosphoserine" evidence="18">
    <location>
        <position position="1396"/>
    </location>
</feature>
<feature type="modified residue" description="Phosphoserine" evidence="2">
    <location>
        <position position="1399"/>
    </location>
</feature>
<feature type="splice variant" id="VSP_040864" description="In isoform 7." evidence="16">
    <location>
        <begin position="1"/>
        <end position="1126"/>
    </location>
</feature>
<feature type="splice variant" id="VSP_040865" description="In isoform 1 and isoform 3." evidence="12 13">
    <location>
        <begin position="1"/>
        <end position="223"/>
    </location>
</feature>
<feature type="splice variant" id="VSP_044661" description="In isoform 8." evidence="11">
    <original>KVKEEHKPQLTQWFPFSGITELVNNVLQPQQKQQNEKEPQT</original>
    <variation>EEEKEQSVLK</variation>
    <location>
        <begin position="50"/>
        <end position="90"/>
    </location>
</feature>
<feature type="splice variant" id="VSP_040866" description="In isoform 1 and isoform 3." evidence="12 13">
    <original>SGDLSVPAVEKSRSHGLTRQHSIKNGSGVKHHIASDIASD</original>
    <variation>MQFETLRQVCNSVLSHFHGVFSSPPNILQNELFGQTLNNA</variation>
    <location>
        <begin position="224"/>
        <end position="263"/>
    </location>
</feature>
<feature type="splice variant" id="VSP_040867" description="In isoform 3 and isoform 8." evidence="11 12">
    <original>SQKGKRKTSEQAVLSDSNTRSERQKEMMYFGGHSLEEDLEWSEPQIKDSGVDTCSSTTLNEEHSHSDK</original>
    <variation>MDYNWLDHTSWHSSEASPMSL</variation>
    <location>
        <begin position="575"/>
        <end position="642"/>
    </location>
</feature>
<feature type="splice variant" id="VSP_040868" description="In isoform 4." evidence="15">
    <original>SSSFESQKMDRPSISVTSPMSPGMLRDV</original>
    <variation>KFYLCWKKTLFIIAFIRDQMKYLTSNVK</variation>
    <location>
        <begin position="774"/>
        <end position="801"/>
    </location>
</feature>
<feature type="splice variant" id="VSP_040871" description="In isoform 4." evidence="15">
    <location>
        <begin position="802"/>
        <end position="1411"/>
    </location>
</feature>
<feature type="splice variant" id="VSP_044662" description="In isoform 8." evidence="11">
    <original>S</original>
    <variation>SSQSLSRRTTPFVPRVQ</variation>
    <location>
        <position position="810"/>
    </location>
</feature>
<feature type="splice variant" id="VSP_040869" description="In isoform 5." evidence="15">
    <original>IKLWFDKVGHQLIV</original>
    <variation>VCSHYVYSSFWNIK</variation>
    <location>
        <begin position="811"/>
        <end position="824"/>
    </location>
</feature>
<feature type="splice variant" id="VSP_040870" description="In isoform 5." evidence="15">
    <location>
        <begin position="825"/>
        <end position="1411"/>
    </location>
</feature>
<feature type="splice variant" id="VSP_040872" description="In isoform 2." evidence="14">
    <original>S</original>
    <variation>R</variation>
    <location>
        <position position="1038"/>
    </location>
</feature>
<feature type="splice variant" id="VSP_040873" description="In isoform 2." evidence="14">
    <location>
        <begin position="1039"/>
        <end position="1411"/>
    </location>
</feature>
<feature type="splice variant" id="VSP_040874" description="In isoform 3." evidence="12">
    <original>D</original>
    <variation>DSHFLTLPRSRYSQTIDHHHRDG</variation>
    <location>
        <position position="1076"/>
    </location>
</feature>
<feature type="splice variant" id="VSP_040875" description="In isoform 7." evidence="16">
    <original>RSAPPSPALSRSHPRTGSVQTSPSSTPVAGRRGRQLPQLPPKGTLDRK</original>
    <variation>MGRQGLGGASAAGRSMQRSQSRSSLSASFEALAGYFPCMNSLEEEEGE</variation>
    <location>
        <begin position="1127"/>
        <end position="1174"/>
    </location>
</feature>
<feature type="sequence variant" id="VAR_084549" description="In CRSDS." evidence="10">
    <location>
        <begin position="532"/>
        <end position="1411"/>
    </location>
</feature>
<feature type="sequence variant" id="VAR_084550" description="In CRSDS." evidence="10">
    <location>
        <begin position="962"/>
        <end position="1411"/>
    </location>
</feature>
<feature type="sequence variant" id="VAR_084551" description="In CRSDS." evidence="10">
    <location>
        <begin position="1042"/>
        <end position="1411"/>
    </location>
</feature>
<feature type="sequence variant" id="VAR_084552" description="In CRSDS." evidence="10">
    <location>
        <begin position="1170"/>
        <end position="1411"/>
    </location>
</feature>
<feature type="sequence conflict" description="In Ref. 5; AAH43144." evidence="16" ref="5">
    <original>S</original>
    <variation>F</variation>
    <location>
        <position position="309"/>
    </location>
</feature>
<feature type="sequence conflict" description="In Ref. 5; AAH43144." evidence="16" ref="5">
    <original>Q</original>
    <variation>R</variation>
    <location>
        <position position="518"/>
    </location>
</feature>
<feature type="sequence conflict" description="In Ref. 3; BAG54403." evidence="16" ref="3">
    <original>M</original>
    <variation>V</variation>
    <location>
        <position position="947"/>
    </location>
</feature>
<feature type="strand" evidence="20">
    <location>
        <begin position="646"/>
        <end position="649"/>
    </location>
</feature>
<feature type="strand" evidence="20">
    <location>
        <begin position="651"/>
        <end position="663"/>
    </location>
</feature>
<feature type="turn" evidence="20">
    <location>
        <begin position="677"/>
        <end position="680"/>
    </location>
</feature>
<feature type="strand" evidence="20">
    <location>
        <begin position="681"/>
        <end position="688"/>
    </location>
</feature>
<feature type="strand" evidence="20">
    <location>
        <begin position="690"/>
        <end position="692"/>
    </location>
</feature>
<feature type="strand" evidence="20">
    <location>
        <begin position="694"/>
        <end position="701"/>
    </location>
</feature>
<feature type="helix" evidence="20">
    <location>
        <begin position="706"/>
        <end position="710"/>
    </location>
</feature>
<feature type="strand" evidence="20">
    <location>
        <begin position="718"/>
        <end position="722"/>
    </location>
</feature>
<feature type="helix" evidence="20">
    <location>
        <begin position="732"/>
        <end position="741"/>
    </location>
</feature>
<feature type="strand" evidence="20">
    <location>
        <begin position="743"/>
        <end position="754"/>
    </location>
</feature>
<feature type="strand" evidence="19">
    <location>
        <begin position="808"/>
        <end position="816"/>
    </location>
</feature>
<feature type="turn" evidence="19">
    <location>
        <begin position="817"/>
        <end position="820"/>
    </location>
</feature>
<feature type="strand" evidence="19">
    <location>
        <begin position="821"/>
        <end position="831"/>
    </location>
</feature>
<feature type="strand" evidence="19">
    <location>
        <begin position="836"/>
        <end position="838"/>
    </location>
</feature>
<feature type="strand" evidence="19">
    <location>
        <begin position="843"/>
        <end position="846"/>
    </location>
</feature>
<feature type="strand" evidence="19">
    <location>
        <begin position="854"/>
        <end position="857"/>
    </location>
</feature>
<feature type="helix" evidence="19">
    <location>
        <begin position="885"/>
        <end position="887"/>
    </location>
</feature>
<feature type="strand" evidence="19">
    <location>
        <begin position="890"/>
        <end position="898"/>
    </location>
</feature>
<feature type="strand" evidence="19">
    <location>
        <begin position="900"/>
        <end position="903"/>
    </location>
</feature>
<feature type="strand" evidence="19">
    <location>
        <begin position="910"/>
        <end position="915"/>
    </location>
</feature>
<feature type="helix" evidence="19">
    <location>
        <begin position="916"/>
        <end position="918"/>
    </location>
</feature>
<feature type="strand" evidence="19">
    <location>
        <begin position="925"/>
        <end position="929"/>
    </location>
</feature>
<keyword id="KW-0002">3D-structure</keyword>
<keyword id="KW-0025">Alternative splicing</keyword>
<keyword id="KW-1003">Cell membrane</keyword>
<keyword id="KW-0966">Cell projection</keyword>
<keyword id="KW-0221">Differentiation</keyword>
<keyword id="KW-0225">Disease variant</keyword>
<keyword id="KW-0472">Membrane</keyword>
<keyword id="KW-0479">Metal-binding</keyword>
<keyword id="KW-0597">Phosphoprotein</keyword>
<keyword id="KW-1267">Proteomics identification</keyword>
<keyword id="KW-1185">Reference proteome</keyword>
<keyword id="KW-0677">Repeat</keyword>
<keyword id="KW-0770">Synapse</keyword>
<keyword id="KW-0862">Zinc</keyword>
<keyword id="KW-0863">Zinc-finger</keyword>
<sequence length="1411" mass="160403">MSAPVGPRGRLAPIPAASQPPLQPEMPDLSHLTEEERKIILAVMDRQKKKVKEEHKPQLTQWFPFSGITELVNNVLQPQQKQQNEKEPQTKLHQQFEMYKEQVKKMGEESQQQQEQKGDAPTCGICHKTKFADGCGHNCSYCQTKFCARCGGRVSLRSNKVMWVCNLCRKQQEILTKSGAWFYNSGSNTPQQPDQKVLRGLRNEEAPQEKKPKLHEQTQFQGPSGDLSVPAVEKSRSHGLTRQHSIKNGSGVKHHIASDIASDRKRSPSVSRDQNRRYDQREEREEYSQYATSDTAMPRSPSDYADRRSQHEPQFYEDSDHLSYRDSNRRSHRHSKEYIVDDEDVESRDEYERQRREEEYQSRYRSDPNLARYPVKPQPYEEQMRIHAEVSRARHERRHSDVSLANADLEDSRISMLRMDRPSRQRSISERRAAMENQRSYSMERTREAQGPSSYAQRTTNHSPPTPRRSPLPIDRPDLRRTDSLRKQHHLDPSSAVRKTKREKMETMLRNDSLSSDQSESVRPPPPKPHKSKKGGKMRQISLSSSEEELASTPEYTSCDDVEIESESVSEKGDSQKGKRKTSEQAVLSDSNTRSERQKEMMYFGGHSLEEDLEWSEPQIKDSGVDTCSSTTLNEEHSHSDKHPVTWQPSKDGDRLIGRILLNKRLKDGSVPRDSGAMLGLKVVGGKMTESGRLCAFITKVKKGSLADTVGHLRPGDEVLEWNGRLLQGATFEEVYNIILESKPEPQVELVVSRPIGDIPRIPDSTHAQLESSSSSFESQKMDRPSISVTSPMSPGMLRDVPQFLSGQLSIKLWFDKVGHQLIVTILGAKDLPSREDGRPRNPYVKIYFLPDRSDKNKRRTKTVKKTLEPKWNQTFIYSPVHRREFRERMLEITLWDQARVREEESEFLGEILIELETALLDDEPHWYKLQTHDVSSLPLPHPSPYMPRRQLHGESPTRRLQRSKRISDSEVSDYDCDDGIGVVSDYRHDGRDLQSSTLSVPEQVMSSNHCSPSGSPHRVDVIGRTRSWSPSVPPPQSRNVEQGLRGTRTMTGHYNTISRMDRHRVMDDHYSPDRDRDCEAADRQPYHRSRSTEQRPLLERTTTRSRSTERPDTNLMRSMPSLMTGRSAPPSPALSRSHPRTGSVQTSPSSTPVAGRRGRQLPQLPPKGTLDRKAGGKKLRSTVQRSTETGLAVEMRNWMTRQASRESTDGSMNSYSSEGNLIFPGVRLASDSQFSDFLDGLGPAQLVGRQTLATPAMGDIQVGMMDKKGQLEVEIIRARGLVVKPGSKTLPAPYVKVYLLDNGVCIAKKKTKVARKTLEPLYQQLLSFEESPQGKVLQIIVWGDYGRMDHKSFMGVAQILLDELELSNMVIGWFKLFPPSSLVDPTLAPLTRRASQSSLESSTGPSYSRS</sequence>
<name>RIMS2_HUMAN</name>
<evidence type="ECO:0000250" key="1"/>
<evidence type="ECO:0000250" key="2">
    <source>
        <dbReference type="UniProtKB" id="Q9EQZ7"/>
    </source>
</evidence>
<evidence type="ECO:0000250" key="3">
    <source>
        <dbReference type="UniProtKB" id="Q9JIS1"/>
    </source>
</evidence>
<evidence type="ECO:0000255" key="4">
    <source>
        <dbReference type="PROSITE-ProRule" id="PRU00041"/>
    </source>
</evidence>
<evidence type="ECO:0000255" key="5">
    <source>
        <dbReference type="PROSITE-ProRule" id="PRU00091"/>
    </source>
</evidence>
<evidence type="ECO:0000255" key="6">
    <source>
        <dbReference type="PROSITE-ProRule" id="PRU00143"/>
    </source>
</evidence>
<evidence type="ECO:0000255" key="7">
    <source>
        <dbReference type="PROSITE-ProRule" id="PRU00234"/>
    </source>
</evidence>
<evidence type="ECO:0000256" key="8">
    <source>
        <dbReference type="SAM" id="MobiDB-lite"/>
    </source>
</evidence>
<evidence type="ECO:0000269" key="9">
    <source>
    </source>
</evidence>
<evidence type="ECO:0000269" key="10">
    <source>
    </source>
</evidence>
<evidence type="ECO:0000303" key="11">
    <source>
    </source>
</evidence>
<evidence type="ECO:0000303" key="12">
    <source>
    </source>
</evidence>
<evidence type="ECO:0000303" key="13">
    <source>
    </source>
</evidence>
<evidence type="ECO:0000303" key="14">
    <source ref="2"/>
</evidence>
<evidence type="ECO:0000303" key="15">
    <source ref="6"/>
</evidence>
<evidence type="ECO:0000305" key="16"/>
<evidence type="ECO:0007744" key="17">
    <source>
    </source>
</evidence>
<evidence type="ECO:0007744" key="18">
    <source>
    </source>
</evidence>
<evidence type="ECO:0007829" key="19">
    <source>
        <dbReference type="PDB" id="1V27"/>
    </source>
</evidence>
<evidence type="ECO:0007829" key="20">
    <source>
        <dbReference type="PDB" id="1WFG"/>
    </source>
</evidence>
<comment type="function">
    <text evidence="9">Rab effector involved in exocytosis. May act as scaffold protein. Plays a role in dendrite formation by melanocytes (PubMed:23999003).</text>
</comment>
<comment type="subunit">
    <text evidence="1">Interacts with RAB3A and RAB3B that have been activated by GTP-binding. Interacts with RAB3C, RAB3D and RAB26. Interacts with TSPOAP1 and RIMBP2. Interacts with PPFIA3 and PPFIA4. Interacts via its zinc finger with the first C2 domain of UNC13A. Forms a complex consisting of UNC13A, RIMS2 and RAB3A. Heterodimer with PCLO. Part of a ternary complex involving PCLO and EPAC2 (By similarity).</text>
</comment>
<comment type="interaction">
    <interactant intactId="EBI-1756749">
        <id>Q9UQ26</id>
    </interactant>
    <interactant intactId="EBI-389883">
        <id>P16333</id>
        <label>NCK1</label>
    </interactant>
    <organismsDiffer>false</organismsDiffer>
    <experiments>2</experiments>
</comment>
<comment type="subcellular location">
    <subcellularLocation>
        <location evidence="1">Cell membrane</location>
        <topology evidence="1">Peripheral membrane protein</topology>
    </subcellularLocation>
    <subcellularLocation>
        <location evidence="1">Synapse</location>
    </subcellularLocation>
    <subcellularLocation>
        <location evidence="1">Presynaptic cell membrane</location>
        <topology evidence="1">Peripheral membrane protein</topology>
    </subcellularLocation>
</comment>
<comment type="alternative products">
    <event type="alternative splicing"/>
    <isoform>
        <id>Q9UQ26-6</id>
        <name>6</name>
        <name>RIM2-alpha</name>
        <sequence type="displayed"/>
    </isoform>
    <isoform>
        <id>Q9UQ26-1</id>
        <name>1</name>
        <name>RIM2-beta</name>
        <sequence type="described" ref="VSP_040865 VSP_040866"/>
    </isoform>
    <isoform>
        <id>Q9UQ26-2</id>
        <name>2</name>
        <sequence type="described" ref="VSP_040872 VSP_040873"/>
    </isoform>
    <isoform>
        <id>Q9UQ26-3</id>
        <name>3</name>
        <sequence type="described" ref="VSP_040865 VSP_040866 VSP_040867 VSP_040874"/>
    </isoform>
    <isoform>
        <id>Q9UQ26-4</id>
        <name>4</name>
        <name>RimL3a</name>
        <sequence type="described" ref="VSP_040868 VSP_040871"/>
    </isoform>
    <isoform>
        <id>Q9UQ26-5</id>
        <name>5</name>
        <name>RimL3c</name>
        <sequence type="described" ref="VSP_040869 VSP_040870"/>
    </isoform>
    <isoform>
        <id>Q9UQ26-7</id>
        <name>7</name>
        <name>RIM2-gamma</name>
        <sequence type="described" ref="VSP_040864 VSP_040875"/>
    </isoform>
    <isoform>
        <id>Q9UQ26-8</id>
        <name>8</name>
        <sequence type="described" ref="VSP_044661 VSP_040867 VSP_044662"/>
    </isoform>
</comment>
<comment type="tissue specificity">
    <text evidence="9 10">Widely expressed (PubMed:32470375). Expressed in melanocytes (PubMed:23999003). In fetal tissues, predominantly expressed in the brain (PubMed:32470375). In the retina, expressed in the outer plexiform layer (at protein level) (PubMed:32470375). In the cerebellum, expressed in Purkinje cells (at protein level) (PubMed:32470375). In the pancreas, expressed in Langerhans islets (at protein level) (PubMed:32470375).</text>
</comment>
<comment type="disease" evidence="10">
    <disease id="DI-05888">
        <name>Cone-rod synaptic disorder syndrome, congenital non-progressive</name>
        <acronym>CRSDS</acronym>
        <description>An autosomal recessive disorder characterized by reduced visual acuity, photophobia, nystagmus, distinctive electroretinographic features, neurodevelopmental delay, poor or absent language, autistic behaviors, and abnormal glucose homeostasis.</description>
        <dbReference type="MIM" id="618970"/>
    </disease>
    <text>The disease is caused by variants affecting the gene represented in this entry.</text>
</comment>
<comment type="miscellaneous">
    <molecule>Isoform 2</molecule>
    <text evidence="16">May be due to an intron retention.</text>
</comment>
<comment type="miscellaneous">
    <molecule>Isoform 4</molecule>
    <text evidence="16">May be due to an intron retention.</text>
</comment>
<comment type="miscellaneous">
    <molecule>Isoform 5</molecule>
    <text evidence="16">May be due to an intron retention.</text>
</comment>
<comment type="sequence caution" evidence="16">
    <conflict type="erroneous initiation">
        <sequence resource="EMBL-CDS" id="BAA34471"/>
    </conflict>
    <text>Extended N-terminus.</text>
</comment>